<organism>
    <name type="scientific">Gloeothece citriformis (strain PCC 7424)</name>
    <name type="common">Cyanothece sp. (strain PCC 7424)</name>
    <dbReference type="NCBI Taxonomy" id="65393"/>
    <lineage>
        <taxon>Bacteria</taxon>
        <taxon>Bacillati</taxon>
        <taxon>Cyanobacteriota</taxon>
        <taxon>Cyanophyceae</taxon>
        <taxon>Oscillatoriophycideae</taxon>
        <taxon>Chroococcales</taxon>
        <taxon>Aphanothecaceae</taxon>
        <taxon>Gloeothece</taxon>
        <taxon>Gloeothece citriformis</taxon>
    </lineage>
</organism>
<comment type="cofactor">
    <cofactor evidence="1">
        <name>Fe(2+)</name>
        <dbReference type="ChEBI" id="CHEBI:29033"/>
    </cofactor>
    <text evidence="1">Binds 1 Fe(2+) ion per subunit.</text>
</comment>
<comment type="cofactor">
    <cofactor evidence="1">
        <name>L-ascorbate</name>
        <dbReference type="ChEBI" id="CHEBI:38290"/>
    </cofactor>
</comment>
<sequence length="220" mass="24825">MIFTVPTVLEPSQLEQIRSILEKAEFVDGKLTAGWHAQLVKENQQLKSGQIQTQLTQTVKDALLKNALFQTAVRPRKIHSLLFSRYEVGMSYGTHIDNGLMGSNFWRSDVSFTLFLTAPKDYEGGELVIEGADDEKAYKLDLNSVLVYPSSTLHRVEPVTKGTRLVAVGWVQSLVRDASEREILFDLETARRAIFVQQGKTPEFDLISKSIANLLRKWAE</sequence>
<name>Y1929_GLOC7</name>
<protein>
    <recommendedName>
        <fullName evidence="1">PKHD-type hydroxylase PCC7424_1929</fullName>
        <ecNumber evidence="1">1.14.11.-</ecNumber>
    </recommendedName>
</protein>
<reference key="1">
    <citation type="journal article" date="2011" name="MBio">
        <title>Novel metabolic attributes of the genus Cyanothece, comprising a group of unicellular nitrogen-fixing Cyanobacteria.</title>
        <authorList>
            <person name="Bandyopadhyay A."/>
            <person name="Elvitigala T."/>
            <person name="Welsh E."/>
            <person name="Stockel J."/>
            <person name="Liberton M."/>
            <person name="Min H."/>
            <person name="Sherman L.A."/>
            <person name="Pakrasi H.B."/>
        </authorList>
    </citation>
    <scope>NUCLEOTIDE SEQUENCE [LARGE SCALE GENOMIC DNA]</scope>
    <source>
        <strain>PCC 7424</strain>
    </source>
</reference>
<dbReference type="EC" id="1.14.11.-" evidence="1"/>
<dbReference type="EMBL" id="CP001291">
    <property type="protein sequence ID" value="ACK70360.1"/>
    <property type="molecule type" value="Genomic_DNA"/>
</dbReference>
<dbReference type="RefSeq" id="WP_012599303.1">
    <property type="nucleotide sequence ID" value="NC_011729.1"/>
</dbReference>
<dbReference type="SMR" id="B7KDQ8"/>
<dbReference type="STRING" id="65393.PCC7424_1929"/>
<dbReference type="KEGG" id="cyc:PCC7424_1929"/>
<dbReference type="eggNOG" id="COG3128">
    <property type="taxonomic scope" value="Bacteria"/>
</dbReference>
<dbReference type="HOGENOM" id="CLU_106663_0_0_3"/>
<dbReference type="OrthoDB" id="9812472at2"/>
<dbReference type="Proteomes" id="UP000002384">
    <property type="component" value="Chromosome"/>
</dbReference>
<dbReference type="GO" id="GO:0016706">
    <property type="term" value="F:2-oxoglutarate-dependent dioxygenase activity"/>
    <property type="evidence" value="ECO:0007669"/>
    <property type="project" value="UniProtKB-UniRule"/>
</dbReference>
<dbReference type="GO" id="GO:0005506">
    <property type="term" value="F:iron ion binding"/>
    <property type="evidence" value="ECO:0007669"/>
    <property type="project" value="UniProtKB-UniRule"/>
</dbReference>
<dbReference type="GO" id="GO:0031418">
    <property type="term" value="F:L-ascorbic acid binding"/>
    <property type="evidence" value="ECO:0007669"/>
    <property type="project" value="UniProtKB-KW"/>
</dbReference>
<dbReference type="GO" id="GO:0006974">
    <property type="term" value="P:DNA damage response"/>
    <property type="evidence" value="ECO:0007669"/>
    <property type="project" value="TreeGrafter"/>
</dbReference>
<dbReference type="GO" id="GO:0006879">
    <property type="term" value="P:intracellular iron ion homeostasis"/>
    <property type="evidence" value="ECO:0007669"/>
    <property type="project" value="TreeGrafter"/>
</dbReference>
<dbReference type="Gene3D" id="2.60.120.620">
    <property type="entry name" value="q2cbj1_9rhob like domain"/>
    <property type="match status" value="1"/>
</dbReference>
<dbReference type="Gene3D" id="4.10.860.20">
    <property type="entry name" value="Rabenosyn, Rab binding domain"/>
    <property type="match status" value="1"/>
</dbReference>
<dbReference type="HAMAP" id="MF_00657">
    <property type="entry name" value="Hydroxyl_YbiX"/>
    <property type="match status" value="1"/>
</dbReference>
<dbReference type="InterPro" id="IPR005123">
    <property type="entry name" value="Oxoglu/Fe-dep_dioxygenase_dom"/>
</dbReference>
<dbReference type="InterPro" id="IPR023550">
    <property type="entry name" value="PKHD_hydroxylase"/>
</dbReference>
<dbReference type="InterPro" id="IPR006620">
    <property type="entry name" value="Pro_4_hyd_alph"/>
</dbReference>
<dbReference type="InterPro" id="IPR044862">
    <property type="entry name" value="Pro_4_hyd_alph_FE2OG_OXY"/>
</dbReference>
<dbReference type="NCBIfam" id="NF003974">
    <property type="entry name" value="PRK05467.1-3"/>
    <property type="match status" value="1"/>
</dbReference>
<dbReference type="NCBIfam" id="NF003975">
    <property type="entry name" value="PRK05467.1-4"/>
    <property type="match status" value="1"/>
</dbReference>
<dbReference type="PANTHER" id="PTHR41536">
    <property type="entry name" value="PKHD-TYPE HYDROXYLASE YBIX"/>
    <property type="match status" value="1"/>
</dbReference>
<dbReference type="PANTHER" id="PTHR41536:SF1">
    <property type="entry name" value="PKHD-TYPE HYDROXYLASE YBIX"/>
    <property type="match status" value="1"/>
</dbReference>
<dbReference type="Pfam" id="PF13640">
    <property type="entry name" value="2OG-FeII_Oxy_3"/>
    <property type="match status" value="1"/>
</dbReference>
<dbReference type="SMART" id="SM00702">
    <property type="entry name" value="P4Hc"/>
    <property type="match status" value="1"/>
</dbReference>
<dbReference type="PROSITE" id="PS51471">
    <property type="entry name" value="FE2OG_OXY"/>
    <property type="match status" value="1"/>
</dbReference>
<accession>B7KDQ8</accession>
<evidence type="ECO:0000255" key="1">
    <source>
        <dbReference type="HAMAP-Rule" id="MF_00657"/>
    </source>
</evidence>
<proteinExistence type="inferred from homology"/>
<feature type="chain" id="PRO_1000131207" description="PKHD-type hydroxylase PCC7424_1929">
    <location>
        <begin position="1"/>
        <end position="220"/>
    </location>
</feature>
<feature type="domain" description="Fe2OG dioxygenase" evidence="1">
    <location>
        <begin position="77"/>
        <end position="173"/>
    </location>
</feature>
<feature type="binding site" evidence="1">
    <location>
        <position position="95"/>
    </location>
    <ligand>
        <name>Fe cation</name>
        <dbReference type="ChEBI" id="CHEBI:24875"/>
    </ligand>
</feature>
<feature type="binding site" evidence="1">
    <location>
        <position position="97"/>
    </location>
    <ligand>
        <name>Fe cation</name>
        <dbReference type="ChEBI" id="CHEBI:24875"/>
    </ligand>
</feature>
<feature type="binding site" evidence="1">
    <location>
        <position position="154"/>
    </location>
    <ligand>
        <name>Fe cation</name>
        <dbReference type="ChEBI" id="CHEBI:24875"/>
    </ligand>
</feature>
<feature type="binding site" evidence="1">
    <location>
        <position position="164"/>
    </location>
    <ligand>
        <name>2-oxoglutarate</name>
        <dbReference type="ChEBI" id="CHEBI:16810"/>
    </ligand>
</feature>
<keyword id="KW-0223">Dioxygenase</keyword>
<keyword id="KW-0408">Iron</keyword>
<keyword id="KW-0479">Metal-binding</keyword>
<keyword id="KW-0560">Oxidoreductase</keyword>
<keyword id="KW-1185">Reference proteome</keyword>
<keyword id="KW-0847">Vitamin C</keyword>
<gene>
    <name type="ordered locus">PCC7424_1929</name>
</gene>